<protein>
    <recommendedName>
        <fullName>Netrin receptor UNC5C</fullName>
    </recommendedName>
    <alternativeName>
        <fullName>Protein unc-5 homolog 3</fullName>
    </alternativeName>
    <alternativeName>
        <fullName>Protein unc-5 homolog C</fullName>
    </alternativeName>
    <alternativeName>
        <fullName evidence="19">Rostral cerebellar malformation protein</fullName>
    </alternativeName>
</protein>
<dbReference type="EMBL" id="U72634">
    <property type="protein sequence ID" value="AAB54103.1"/>
    <property type="molecule type" value="mRNA"/>
</dbReference>
<dbReference type="EMBL" id="AK031655">
    <property type="protein sequence ID" value="BAC27495.1"/>
    <property type="molecule type" value="mRNA"/>
</dbReference>
<dbReference type="CCDS" id="CCDS17873.1">
    <molecule id="O08747-1"/>
</dbReference>
<dbReference type="CCDS" id="CCDS80034.1">
    <molecule id="O08747-2"/>
</dbReference>
<dbReference type="RefSeq" id="NP_001280490.1">
    <molecule id="O08747-2"/>
    <property type="nucleotide sequence ID" value="NM_001293561.2"/>
</dbReference>
<dbReference type="RefSeq" id="NP_033498.1">
    <molecule id="O08747-1"/>
    <property type="nucleotide sequence ID" value="NM_009472.5"/>
</dbReference>
<dbReference type="SMR" id="O08747"/>
<dbReference type="BioGRID" id="204445">
    <property type="interactions" value="7"/>
</dbReference>
<dbReference type="FunCoup" id="O08747">
    <property type="interactions" value="407"/>
</dbReference>
<dbReference type="IntAct" id="O08747">
    <property type="interactions" value="1"/>
</dbReference>
<dbReference type="STRING" id="10090.ENSMUSP00000074758"/>
<dbReference type="GlyCosmos" id="O08747">
    <property type="glycosylation" value="2 sites, No reported glycans"/>
</dbReference>
<dbReference type="GlyGen" id="O08747">
    <property type="glycosylation" value="2 sites"/>
</dbReference>
<dbReference type="iPTMnet" id="O08747"/>
<dbReference type="PhosphoSitePlus" id="O08747"/>
<dbReference type="SwissPalm" id="O08747"/>
<dbReference type="PaxDb" id="10090-ENSMUSP00000101843"/>
<dbReference type="ProteomicsDB" id="300199">
    <molecule id="O08747-1"/>
</dbReference>
<dbReference type="ProteomicsDB" id="300200">
    <molecule id="O08747-2"/>
</dbReference>
<dbReference type="Antibodypedia" id="2665">
    <property type="antibodies" value="257 antibodies from 33 providers"/>
</dbReference>
<dbReference type="DNASU" id="22253"/>
<dbReference type="Ensembl" id="ENSMUST00000075282.10">
    <molecule id="O08747-2"/>
    <property type="protein sequence ID" value="ENSMUSP00000074758.4"/>
    <property type="gene ID" value="ENSMUSG00000059921.16"/>
</dbReference>
<dbReference type="Ensembl" id="ENSMUST00000106236.9">
    <molecule id="O08747-1"/>
    <property type="protein sequence ID" value="ENSMUSP00000101843.3"/>
    <property type="gene ID" value="ENSMUSG00000059921.16"/>
</dbReference>
<dbReference type="Ensembl" id="ENSMUST00000142762.2">
    <molecule id="O08747-2"/>
    <property type="protein sequence ID" value="ENSMUSP00000118212.2"/>
    <property type="gene ID" value="ENSMUSG00000059921.16"/>
</dbReference>
<dbReference type="GeneID" id="22253"/>
<dbReference type="KEGG" id="mmu:22253"/>
<dbReference type="UCSC" id="uc008roe.2">
    <molecule id="O08747-1"/>
    <property type="organism name" value="mouse"/>
</dbReference>
<dbReference type="AGR" id="MGI:1095412"/>
<dbReference type="CTD" id="8633"/>
<dbReference type="MGI" id="MGI:1095412">
    <property type="gene designation" value="Unc5c"/>
</dbReference>
<dbReference type="VEuPathDB" id="HostDB:ENSMUSG00000059921"/>
<dbReference type="eggNOG" id="KOG1480">
    <property type="taxonomic scope" value="Eukaryota"/>
</dbReference>
<dbReference type="GeneTree" id="ENSGT00950000182815"/>
<dbReference type="HOGENOM" id="CLU_014383_0_0_1"/>
<dbReference type="InParanoid" id="O08747"/>
<dbReference type="OMA" id="CECQAWS"/>
<dbReference type="OrthoDB" id="5973910at2759"/>
<dbReference type="TreeFam" id="TF316767"/>
<dbReference type="BioGRID-ORCS" id="22253">
    <property type="hits" value="1 hit in 76 CRISPR screens"/>
</dbReference>
<dbReference type="ChiTaRS" id="Unc5c">
    <property type="organism name" value="mouse"/>
</dbReference>
<dbReference type="PRO" id="PR:O08747"/>
<dbReference type="Proteomes" id="UP000000589">
    <property type="component" value="Chromosome 3"/>
</dbReference>
<dbReference type="RNAct" id="O08747">
    <property type="molecule type" value="protein"/>
</dbReference>
<dbReference type="Bgee" id="ENSMUSG00000059921">
    <property type="expression patterns" value="Expressed in ureter smooth muscle and 250 other cell types or tissues"/>
</dbReference>
<dbReference type="ExpressionAtlas" id="O08747">
    <property type="expression patterns" value="baseline and differential"/>
</dbReference>
<dbReference type="GO" id="GO:0030424">
    <property type="term" value="C:axon"/>
    <property type="evidence" value="ECO:0000314"/>
    <property type="project" value="UniProtKB"/>
</dbReference>
<dbReference type="GO" id="GO:0009986">
    <property type="term" value="C:cell surface"/>
    <property type="evidence" value="ECO:0007669"/>
    <property type="project" value="UniProtKB-SubCell"/>
</dbReference>
<dbReference type="GO" id="GO:0030425">
    <property type="term" value="C:dendrite"/>
    <property type="evidence" value="ECO:0000314"/>
    <property type="project" value="UniProtKB"/>
</dbReference>
<dbReference type="GO" id="GO:0030175">
    <property type="term" value="C:filopodium"/>
    <property type="evidence" value="ECO:0000314"/>
    <property type="project" value="UniProtKB"/>
</dbReference>
<dbReference type="GO" id="GO:0030426">
    <property type="term" value="C:growth cone"/>
    <property type="evidence" value="ECO:0000314"/>
    <property type="project" value="UniProtKB"/>
</dbReference>
<dbReference type="GO" id="GO:0030027">
    <property type="term" value="C:lamellipodium"/>
    <property type="evidence" value="ECO:0000314"/>
    <property type="project" value="UniProtKB"/>
</dbReference>
<dbReference type="GO" id="GO:0043025">
    <property type="term" value="C:neuronal cell body"/>
    <property type="evidence" value="ECO:0000314"/>
    <property type="project" value="UniProtKB"/>
</dbReference>
<dbReference type="GO" id="GO:0005886">
    <property type="term" value="C:plasma membrane"/>
    <property type="evidence" value="ECO:0000314"/>
    <property type="project" value="MGI"/>
</dbReference>
<dbReference type="GO" id="GO:0045202">
    <property type="term" value="C:synapse"/>
    <property type="evidence" value="ECO:0007669"/>
    <property type="project" value="UniProtKB-SubCell"/>
</dbReference>
<dbReference type="GO" id="GO:0005042">
    <property type="term" value="F:netrin receptor activity"/>
    <property type="evidence" value="ECO:0000314"/>
    <property type="project" value="MGI"/>
</dbReference>
<dbReference type="GO" id="GO:0005043">
    <property type="term" value="F:netrin receptor activity involved in chemorepulsion"/>
    <property type="evidence" value="ECO:0000314"/>
    <property type="project" value="UniProtKB"/>
</dbReference>
<dbReference type="GO" id="GO:0019901">
    <property type="term" value="F:protein kinase binding"/>
    <property type="evidence" value="ECO:0007669"/>
    <property type="project" value="Ensembl"/>
</dbReference>
<dbReference type="GO" id="GO:0015631">
    <property type="term" value="F:tubulin binding"/>
    <property type="evidence" value="ECO:0000353"/>
    <property type="project" value="UniProtKB"/>
</dbReference>
<dbReference type="GO" id="GO:0033564">
    <property type="term" value="P:anterior/posterior axon guidance"/>
    <property type="evidence" value="ECO:0000315"/>
    <property type="project" value="MGI"/>
</dbReference>
<dbReference type="GO" id="GO:0006915">
    <property type="term" value="P:apoptotic process"/>
    <property type="evidence" value="ECO:0000315"/>
    <property type="project" value="MGI"/>
</dbReference>
<dbReference type="GO" id="GO:0007411">
    <property type="term" value="P:axon guidance"/>
    <property type="evidence" value="ECO:0000314"/>
    <property type="project" value="UniProtKB"/>
</dbReference>
<dbReference type="GO" id="GO:0007420">
    <property type="term" value="P:brain development"/>
    <property type="evidence" value="ECO:0000315"/>
    <property type="project" value="MGI"/>
</dbReference>
<dbReference type="GO" id="GO:0061643">
    <property type="term" value="P:chemorepulsion of axon"/>
    <property type="evidence" value="ECO:0000315"/>
    <property type="project" value="UniProtKB"/>
</dbReference>
<dbReference type="GO" id="GO:1990791">
    <property type="term" value="P:dorsal root ganglion development"/>
    <property type="evidence" value="ECO:0000250"/>
    <property type="project" value="UniProtKB"/>
</dbReference>
<dbReference type="GO" id="GO:0035234">
    <property type="term" value="P:ectopic germ cell programmed cell death"/>
    <property type="evidence" value="ECO:0000315"/>
    <property type="project" value="MGI"/>
</dbReference>
<dbReference type="GO" id="GO:0038007">
    <property type="term" value="P:netrin-activated signaling pathway"/>
    <property type="evidence" value="ECO:0000316"/>
    <property type="project" value="UniProtKB"/>
</dbReference>
<dbReference type="GO" id="GO:0043065">
    <property type="term" value="P:positive regulation of apoptotic process"/>
    <property type="evidence" value="ECO:0000315"/>
    <property type="project" value="MGI"/>
</dbReference>
<dbReference type="GO" id="GO:0051094">
    <property type="term" value="P:positive regulation of developmental process"/>
    <property type="evidence" value="ECO:0000315"/>
    <property type="project" value="MGI"/>
</dbReference>
<dbReference type="GO" id="GO:2000243">
    <property type="term" value="P:positive regulation of reproductive process"/>
    <property type="evidence" value="ECO:0000315"/>
    <property type="project" value="MGI"/>
</dbReference>
<dbReference type="GO" id="GO:0030334">
    <property type="term" value="P:regulation of cell migration"/>
    <property type="evidence" value="ECO:0000315"/>
    <property type="project" value="MGI"/>
</dbReference>
<dbReference type="GO" id="GO:2001222">
    <property type="term" value="P:regulation of neuron migration"/>
    <property type="evidence" value="ECO:0000315"/>
    <property type="project" value="MGI"/>
</dbReference>
<dbReference type="CDD" id="cd08799">
    <property type="entry name" value="Death_UNC5C"/>
    <property type="match status" value="1"/>
</dbReference>
<dbReference type="FunFam" id="1.10.533.10:FF:000001">
    <property type="entry name" value="Unc-5 netrin receptor B"/>
    <property type="match status" value="1"/>
</dbReference>
<dbReference type="FunFam" id="2.20.100.10:FF:000002">
    <property type="entry name" value="Unc-5 netrin receptor C"/>
    <property type="match status" value="1"/>
</dbReference>
<dbReference type="FunFam" id="2.20.100.10:FF:000008">
    <property type="entry name" value="Unc-5 netrin receptor C"/>
    <property type="match status" value="1"/>
</dbReference>
<dbReference type="FunFam" id="2.60.220.30:FF:000003">
    <property type="entry name" value="Unc-5 netrin receptor C"/>
    <property type="match status" value="1"/>
</dbReference>
<dbReference type="FunFam" id="2.60.40.10:FF:000037">
    <property type="entry name" value="Unc-5 netrin receptor C"/>
    <property type="match status" value="1"/>
</dbReference>
<dbReference type="FunFam" id="2.60.40.10:FF:000039">
    <property type="entry name" value="Unc-5 netrin receptor C"/>
    <property type="match status" value="1"/>
</dbReference>
<dbReference type="Gene3D" id="2.60.220.30">
    <property type="match status" value="1"/>
</dbReference>
<dbReference type="Gene3D" id="1.10.533.10">
    <property type="entry name" value="Death Domain, Fas"/>
    <property type="match status" value="1"/>
</dbReference>
<dbReference type="Gene3D" id="2.60.40.10">
    <property type="entry name" value="Immunoglobulins"/>
    <property type="match status" value="2"/>
</dbReference>
<dbReference type="Gene3D" id="2.20.100.10">
    <property type="entry name" value="Thrombospondin type-1 (TSP1) repeat"/>
    <property type="match status" value="2"/>
</dbReference>
<dbReference type="InterPro" id="IPR011029">
    <property type="entry name" value="DEATH-like_dom_sf"/>
</dbReference>
<dbReference type="InterPro" id="IPR000488">
    <property type="entry name" value="Death_dom"/>
</dbReference>
<dbReference type="InterPro" id="IPR042154">
    <property type="entry name" value="Death_UNC5C"/>
</dbReference>
<dbReference type="InterPro" id="IPR007110">
    <property type="entry name" value="Ig-like_dom"/>
</dbReference>
<dbReference type="InterPro" id="IPR036179">
    <property type="entry name" value="Ig-like_dom_sf"/>
</dbReference>
<dbReference type="InterPro" id="IPR013783">
    <property type="entry name" value="Ig-like_fold"/>
</dbReference>
<dbReference type="InterPro" id="IPR013098">
    <property type="entry name" value="Ig_I-set"/>
</dbReference>
<dbReference type="InterPro" id="IPR003599">
    <property type="entry name" value="Ig_sub"/>
</dbReference>
<dbReference type="InterPro" id="IPR003598">
    <property type="entry name" value="Ig_sub2"/>
</dbReference>
<dbReference type="InterPro" id="IPR000884">
    <property type="entry name" value="TSP1_rpt"/>
</dbReference>
<dbReference type="InterPro" id="IPR036383">
    <property type="entry name" value="TSP1_rpt_sf"/>
</dbReference>
<dbReference type="InterPro" id="IPR037936">
    <property type="entry name" value="UNC5"/>
</dbReference>
<dbReference type="InterPro" id="IPR033772">
    <property type="entry name" value="UPA"/>
</dbReference>
<dbReference type="InterPro" id="IPR000906">
    <property type="entry name" value="ZU5_dom"/>
</dbReference>
<dbReference type="PANTHER" id="PTHR12582">
    <property type="entry name" value="NETRIN RECEPTOR UNC5"/>
    <property type="match status" value="1"/>
</dbReference>
<dbReference type="PANTHER" id="PTHR12582:SF7">
    <property type="entry name" value="NETRIN RECEPTOR UNC5C"/>
    <property type="match status" value="1"/>
</dbReference>
<dbReference type="Pfam" id="PF00531">
    <property type="entry name" value="Death"/>
    <property type="match status" value="1"/>
</dbReference>
<dbReference type="Pfam" id="PF07679">
    <property type="entry name" value="I-set"/>
    <property type="match status" value="1"/>
</dbReference>
<dbReference type="Pfam" id="PF00090">
    <property type="entry name" value="TSP_1"/>
    <property type="match status" value="1"/>
</dbReference>
<dbReference type="Pfam" id="PF17217">
    <property type="entry name" value="UPA"/>
    <property type="match status" value="1"/>
</dbReference>
<dbReference type="Pfam" id="PF00791">
    <property type="entry name" value="ZU5"/>
    <property type="match status" value="1"/>
</dbReference>
<dbReference type="PRINTS" id="PR01705">
    <property type="entry name" value="TSP1REPEAT"/>
</dbReference>
<dbReference type="SMART" id="SM00005">
    <property type="entry name" value="DEATH"/>
    <property type="match status" value="1"/>
</dbReference>
<dbReference type="SMART" id="SM00409">
    <property type="entry name" value="IG"/>
    <property type="match status" value="1"/>
</dbReference>
<dbReference type="SMART" id="SM00408">
    <property type="entry name" value="IGc2"/>
    <property type="match status" value="1"/>
</dbReference>
<dbReference type="SMART" id="SM00209">
    <property type="entry name" value="TSP1"/>
    <property type="match status" value="2"/>
</dbReference>
<dbReference type="SMART" id="SM00218">
    <property type="entry name" value="ZU5"/>
    <property type="match status" value="1"/>
</dbReference>
<dbReference type="SUPFAM" id="SSF47986">
    <property type="entry name" value="DEATH domain"/>
    <property type="match status" value="1"/>
</dbReference>
<dbReference type="SUPFAM" id="SSF48726">
    <property type="entry name" value="Immunoglobulin"/>
    <property type="match status" value="2"/>
</dbReference>
<dbReference type="SUPFAM" id="SSF82895">
    <property type="entry name" value="TSP-1 type 1 repeat"/>
    <property type="match status" value="2"/>
</dbReference>
<dbReference type="PROSITE" id="PS50835">
    <property type="entry name" value="IG_LIKE"/>
    <property type="match status" value="1"/>
</dbReference>
<dbReference type="PROSITE" id="PS50092">
    <property type="entry name" value="TSP1"/>
    <property type="match status" value="2"/>
</dbReference>
<dbReference type="PROSITE" id="PS51145">
    <property type="entry name" value="ZU5"/>
    <property type="match status" value="1"/>
</dbReference>
<comment type="function">
    <text evidence="1 3 7 9 11 13 14 15">Receptor for netrin required for axon guidance (PubMed:10399920, PubMed:22685302). Mediates axon repulsion of neuronal growth cones in the developing nervous system upon ligand binding (PubMed:10399920, PubMed:22685302). NTN1/Netrin-1 binding might cause dissociation of UNC5C from polymerized TUBB3 in microtubules and thereby lead to increased microtubule dynamics and axon repulsion (PubMed:28483977). Axon repulsion in growth cones may also be caused by its association with DCC that may trigger signaling for repulsion (PubMed:10399920). Might also collaborate with DSCAM in NTN1-mediated axon repulsion independently of DCC (PubMed:22685302). Also involved in corticospinal tract axon guidance independently of DCC (PubMed:12451134, PubMed:9126743, PubMed:9389662). Involved in dorsal root ganglion axon projection towards the spinal cord (By similarity). It also acts as a dependence receptor required for apoptosis induction when not associated with netrin ligand (By similarity).</text>
</comment>
<comment type="subunit">
    <text evidence="1 7 8 10 11 13">Interacts with DCC (via cytoplasmic domain) (PubMed:10399920, PubMed:11533026). Interacts (tyrosine phosphorylated form) with PTPN11 (PubMed:11533026). Interacts (via extracellular domain) with FLRT3 (via extracellular domain) (PubMed:22405201). Interacts (via Ig-like C2-type domain) with DSCAM (via extracellular domain) (PubMed:22685302). Interacts (via death domain) with DAPK1 (By similarity). Interacts (via cytoplasmic domain) with TUBB3; this interaction is decreased by NTN1/Netrin-1 (PubMed:28483977).</text>
</comment>
<comment type="interaction">
    <interactant intactId="EBI-21004500">
        <id>O08747</id>
    </interactant>
    <interactant intactId="EBI-2255594">
        <id>Q9ERD7</id>
        <label>Tubb3</label>
    </interactant>
    <organismsDiffer>false</organismsDiffer>
    <experiments>3</experiments>
</comment>
<comment type="subcellular location">
    <subcellularLocation>
        <location evidence="10">Cell membrane</location>
        <topology evidence="4">Single-pass type I membrane protein</topology>
    </subcellularLocation>
    <subcellularLocation>
        <location evidence="1">Cell surface</location>
    </subcellularLocation>
    <subcellularLocation>
        <location evidence="3">Synapse</location>
        <location evidence="3">Synaptosome</location>
    </subcellularLocation>
    <subcellularLocation>
        <location evidence="11">Cell projection</location>
        <location evidence="11">Dendrite</location>
    </subcellularLocation>
    <subcellularLocation>
        <location evidence="11">Cell projection</location>
        <location evidence="11">Axon</location>
    </subcellularLocation>
    <subcellularLocation>
        <location evidence="11 13">Cell projection</location>
        <location evidence="11 13">Growth cone</location>
    </subcellularLocation>
    <subcellularLocation>
        <location evidence="13">Cell projection</location>
        <location evidence="13">Lamellipodium</location>
    </subcellularLocation>
    <subcellularLocation>
        <location evidence="13">Cell projection</location>
        <location evidence="13">Filopodium</location>
    </subcellularLocation>
</comment>
<comment type="alternative products">
    <event type="alternative splicing"/>
    <isoform>
        <id>O08747-1</id>
        <name>1</name>
        <sequence type="displayed"/>
    </isoform>
    <isoform>
        <id>O08747-2</id>
        <name>2</name>
        <sequence type="described" ref="VSP_011702"/>
    </isoform>
</comment>
<comment type="tissue specificity">
    <text evidence="11 12 13 14 15">Expressed in cortical and cerebellar neurons, including cells of the external and internal granular layer and of the Purkinje cell layer (at protein level) (PubMed:22685302, PubMed:28483977). Mainly expressed in regions of differentiating neurons (PubMed:9126743). Highly expressed in brain and lung (PubMed:9126743, PubMed:9389662). Expressed in the cerebellum and the neurons of the hippocampus, with enrichment in neurons of the CA3 hippocampal pyramidal layer (PubMed:25419706). Weakly expressed in testis, ovary, spleen, thymus and bladder (PubMed:9126743). Expressed at very low level in kidney, intestine and salivary gland (PubMed:9126743).</text>
</comment>
<comment type="developmental stage">
    <text evidence="11 13">Detected at 15 dpc in the cortex and cerebellum and at postnatal day 2 and 4 in the cerebellum (at protein level).</text>
</comment>
<comment type="PTM">
    <text evidence="8 11">Phosphorylated on different cytoplasmic tyrosine residues (PubMed:11533026). Phosphorylation of Tyr-568 leads to an interaction with PTPN11 phosphatase, suggesting that its activity is regulated by phosphorylation/dephosphorylation (PubMed:11533026). Tyrosine phosphorylation is netrin-dependent (PubMed:11533026, PubMed:22685302).</text>
</comment>
<comment type="PTM">
    <text evidence="3">Proteolytically cleaved by caspases during apoptosis. The cleavage does not take place when the receptor is associated with netrin ligand. Its cleavage by caspases is required to induce apoptosis.</text>
</comment>
<comment type="disease">
    <text evidence="14">Defects in Unc5c are the cause of rostral cerebellar malformation (Rcm). Rcm is characterized by cerebellar and midbrain defects, apparently as a result of abnormal neuronal migration.</text>
</comment>
<comment type="similarity">
    <text evidence="20">Belongs to the unc-5 family.</text>
</comment>
<proteinExistence type="evidence at protein level"/>
<gene>
    <name type="primary">Unc5c</name>
    <name evidence="16" type="synonym">Rcm</name>
    <name evidence="17" type="synonym">Unc5h3</name>
</gene>
<evidence type="ECO:0000250" key="1">
    <source>
        <dbReference type="UniProtKB" id="O95185"/>
    </source>
</evidence>
<evidence type="ECO:0000250" key="2">
    <source>
        <dbReference type="UniProtKB" id="Q6ZN44"/>
    </source>
</evidence>
<evidence type="ECO:0000250" key="3">
    <source>
        <dbReference type="UniProtKB" id="Q761X5"/>
    </source>
</evidence>
<evidence type="ECO:0000255" key="4"/>
<evidence type="ECO:0000255" key="5">
    <source>
        <dbReference type="PROSITE-ProRule" id="PRU00210"/>
    </source>
</evidence>
<evidence type="ECO:0000255" key="6">
    <source>
        <dbReference type="PROSITE-ProRule" id="PRU00485"/>
    </source>
</evidence>
<evidence type="ECO:0000269" key="7">
    <source>
    </source>
</evidence>
<evidence type="ECO:0000269" key="8">
    <source>
    </source>
</evidence>
<evidence type="ECO:0000269" key="9">
    <source>
    </source>
</evidence>
<evidence type="ECO:0000269" key="10">
    <source>
    </source>
</evidence>
<evidence type="ECO:0000269" key="11">
    <source>
    </source>
</evidence>
<evidence type="ECO:0000269" key="12">
    <source>
    </source>
</evidence>
<evidence type="ECO:0000269" key="13">
    <source>
    </source>
</evidence>
<evidence type="ECO:0000269" key="14">
    <source>
    </source>
</evidence>
<evidence type="ECO:0000269" key="15">
    <source>
    </source>
</evidence>
<evidence type="ECO:0000303" key="16">
    <source>
    </source>
</evidence>
<evidence type="ECO:0000303" key="17">
    <source>
    </source>
</evidence>
<evidence type="ECO:0000303" key="18">
    <source>
    </source>
</evidence>
<evidence type="ECO:0000303" key="19">
    <source>
    </source>
</evidence>
<evidence type="ECO:0000305" key="20"/>
<evidence type="ECO:0007744" key="21">
    <source>
    </source>
</evidence>
<name>UNC5C_MOUSE</name>
<keyword id="KW-0025">Alternative splicing</keyword>
<keyword id="KW-0053">Apoptosis</keyword>
<keyword id="KW-1003">Cell membrane</keyword>
<keyword id="KW-0966">Cell projection</keyword>
<keyword id="KW-0217">Developmental protein</keyword>
<keyword id="KW-1015">Disulfide bond</keyword>
<keyword id="KW-0325">Glycoprotein</keyword>
<keyword id="KW-0393">Immunoglobulin domain</keyword>
<keyword id="KW-0472">Membrane</keyword>
<keyword id="KW-0597">Phosphoprotein</keyword>
<keyword id="KW-0675">Receptor</keyword>
<keyword id="KW-1185">Reference proteome</keyword>
<keyword id="KW-0677">Repeat</keyword>
<keyword id="KW-0732">Signal</keyword>
<keyword id="KW-0770">Synapse</keyword>
<keyword id="KW-0771">Synaptosome</keyword>
<keyword id="KW-0812">Transmembrane</keyword>
<keyword id="KW-1133">Transmembrane helix</keyword>
<organism>
    <name type="scientific">Mus musculus</name>
    <name type="common">Mouse</name>
    <dbReference type="NCBI Taxonomy" id="10090"/>
    <lineage>
        <taxon>Eukaryota</taxon>
        <taxon>Metazoa</taxon>
        <taxon>Chordata</taxon>
        <taxon>Craniata</taxon>
        <taxon>Vertebrata</taxon>
        <taxon>Euteleostomi</taxon>
        <taxon>Mammalia</taxon>
        <taxon>Eutheria</taxon>
        <taxon>Euarchontoglires</taxon>
        <taxon>Glires</taxon>
        <taxon>Rodentia</taxon>
        <taxon>Myomorpha</taxon>
        <taxon>Muroidea</taxon>
        <taxon>Muridae</taxon>
        <taxon>Murinae</taxon>
        <taxon>Mus</taxon>
        <taxon>Mus</taxon>
    </lineage>
</organism>
<sequence length="931" mass="103063">MRKGLRATAARCGLGLGYLLQMLVLPALALLSASGTGSAAQDDEFFHELPETFPSDPPEPLPHFLIEPEEAYIVKNKPVNLYCKASPATQIYFKCNSEWVHQKDHVVDERVDETSGLIVREVSIEISRQQVEELFGPEDYWCQCVAWSSAGTTKSRKAYVRIAYLRKTFEQEPLGKEVSLEQEVLLQCRPPEGIPVAEVEWLKNEDIIDPAEDRNFYITIDHNLIIKQARLSDTANYTCVAKNIVAKRKSTTATVIVYVNGGWSTWTEWSVCNSRCGRGYQKRTRTCTNPAPLNGGAFCEGQSVQKIACTTLCPVDGRWTSWSKWSTCGTECTHWRRRECTAPAPKNGGKDCDGLVLQSKNCTDGLCMQAAPDSDDVALYVGIVIAVTVCLAITVVVALFVYRKNHRDFESDIIDSSALNGGFQPVNIKAARQDLLAVPPDLTSAAAMYRGPVYALHDVSDKIPMTNSPILDPLPNLKIKVYNSSGAVTPQDDLAEFSSKLSPQMTQSLLENEALNLKNQSLARQTDPSCTAFGTFNSLGGHLIIPNSGVSLLIPAGAIPQGRVYEMYVTVHRKENMRPPMEDSQTLLTPVVSCGPPGALLTRPVILTLHHCADPSTEDWKIQLKNQAVQGQWEDVVVVGEENFTTPCYIQLDAEACHILTENLSTYALVGQSTTKAAAKRLKLAIFGPLCCSSLEYSIRVYCLDDTQDALKEVLQLERQMGGQLLEEPKALHFKGSIHNLRLSIHDIAHSLWKSKLLAKYQEIPFYHIWSGSQRNLHCTFTLERLSLNTVELVCKLCVRQVEGEGQIFQLNCTVSEEPTGIDLPLLDPASTITTVTGPSAFSIPLPIRQKLCSSLDAPQTRGHDWRMLAHKLNLDRYLNYFATKSSPTGVILDLWEAQNFPDGNLSMLAAVLEEMGRHETVVSLAAEGQY</sequence>
<feature type="signal peptide" evidence="4">
    <location>
        <begin position="1"/>
        <end position="40"/>
    </location>
</feature>
<feature type="chain" id="PRO_0000036076" description="Netrin receptor UNC5C">
    <location>
        <begin position="41"/>
        <end position="931"/>
    </location>
</feature>
<feature type="topological domain" description="Extracellular" evidence="4">
    <location>
        <begin position="41"/>
        <end position="380"/>
    </location>
</feature>
<feature type="transmembrane region" description="Helical" evidence="4">
    <location>
        <begin position="381"/>
        <end position="401"/>
    </location>
</feature>
<feature type="topological domain" description="Cytoplasmic" evidence="4">
    <location>
        <begin position="402"/>
        <end position="931"/>
    </location>
</feature>
<feature type="domain" description="Ig-like">
    <location>
        <begin position="62"/>
        <end position="159"/>
    </location>
</feature>
<feature type="domain" description="Ig-like C2-type">
    <location>
        <begin position="161"/>
        <end position="256"/>
    </location>
</feature>
<feature type="domain" description="TSP type-1 1" evidence="5">
    <location>
        <begin position="260"/>
        <end position="314"/>
    </location>
</feature>
<feature type="domain" description="TSP type-1 2" evidence="5">
    <location>
        <begin position="316"/>
        <end position="368"/>
    </location>
</feature>
<feature type="domain" description="ZU5" evidence="6">
    <location>
        <begin position="530"/>
        <end position="673"/>
    </location>
</feature>
<feature type="domain" description="Death">
    <location>
        <begin position="850"/>
        <end position="929"/>
    </location>
</feature>
<feature type="region of interest" description="Required for netrin-mediated axon repulsion of neuronal growth cones" evidence="11">
    <location>
        <begin position="402"/>
        <end position="931"/>
    </location>
</feature>
<feature type="region of interest" description="Interaction with DCC" evidence="7">
    <location>
        <begin position="694"/>
        <end position="712"/>
    </location>
</feature>
<feature type="site" description="Cleavage; by caspase-3" evidence="3">
    <location>
        <begin position="415"/>
        <end position="416"/>
    </location>
</feature>
<feature type="modified residue" description="Phosphoserine" evidence="21">
    <location>
        <position position="502"/>
    </location>
</feature>
<feature type="modified residue" description="Phosphotyrosine" evidence="8">
    <location>
        <position position="568"/>
    </location>
</feature>
<feature type="glycosylation site" description="N-linked (GlcNAc...) asparagine" evidence="4">
    <location>
        <position position="236"/>
    </location>
</feature>
<feature type="glycosylation site" description="N-linked (GlcNAc...) asparagine" evidence="4">
    <location>
        <position position="361"/>
    </location>
</feature>
<feature type="disulfide bond" evidence="2">
    <location>
        <begin position="83"/>
        <end position="144"/>
    </location>
</feature>
<feature type="disulfide bond" evidence="2">
    <location>
        <begin position="95"/>
        <end position="142"/>
    </location>
</feature>
<feature type="disulfide bond" evidence="2">
    <location>
        <begin position="188"/>
        <end position="239"/>
    </location>
</feature>
<feature type="disulfide bond" evidence="5">
    <location>
        <begin position="272"/>
        <end position="309"/>
    </location>
</feature>
<feature type="disulfide bond" evidence="5">
    <location>
        <begin position="276"/>
        <end position="313"/>
    </location>
</feature>
<feature type="disulfide bond" evidence="5">
    <location>
        <begin position="287"/>
        <end position="299"/>
    </location>
</feature>
<feature type="disulfide bond" evidence="2">
    <location>
        <begin position="328"/>
        <end position="362"/>
    </location>
</feature>
<feature type="disulfide bond" evidence="2">
    <location>
        <begin position="332"/>
        <end position="367"/>
    </location>
</feature>
<feature type="disulfide bond" evidence="2">
    <location>
        <begin position="340"/>
        <end position="352"/>
    </location>
</feature>
<feature type="splice variant" id="VSP_011702" description="In isoform 2." evidence="18">
    <original>A</original>
    <variation>GFIYPISTEHRPQNEYGFSS</variation>
    <location>
        <position position="370"/>
    </location>
</feature>
<feature type="mutagenesis site" description="Abolishes interaction with PTPN11, leading to an increased level of phosphorylation." evidence="8">
    <original>Y</original>
    <variation>F</variation>
    <location>
        <position position="568"/>
    </location>
</feature>
<feature type="sequence conflict" description="In Ref. 2; BAC27495." evidence="20" ref="2">
    <original>L</original>
    <variation>I</variation>
    <location>
        <position position="16"/>
    </location>
</feature>
<feature type="sequence conflict" description="In Ref. 2; BAC27495." evidence="20" ref="2">
    <original>H</original>
    <variation>R</variation>
    <location>
        <position position="733"/>
    </location>
</feature>
<feature type="sequence conflict" description="In Ref. 2; BAC27495." evidence="20" ref="2">
    <original>S</original>
    <variation>Y</variation>
    <location>
        <position position="924"/>
    </location>
</feature>
<accession>O08747</accession>
<accession>Q8CD16</accession>
<reference key="1">
    <citation type="journal article" date="1997" name="Nature">
        <title>The mouse rostral cerebellar malformation gene encodes an UNC-5-like protein.</title>
        <authorList>
            <person name="Ackerman S.L."/>
            <person name="Kozak L.P."/>
            <person name="Przyborski S.A."/>
            <person name="Rund L.A."/>
            <person name="Boyer B.B."/>
            <person name="Knowles B.B."/>
        </authorList>
    </citation>
    <scope>NUCLEOTIDE SEQUENCE [MRNA] (ISOFORM 1)</scope>
    <scope>FUNCTION</scope>
    <scope>DISEASE</scope>
    <scope>TISSUE SPECIFICITY</scope>
    <source>
        <strain>C57B6/SJL</strain>
    </source>
</reference>
<reference key="2">
    <citation type="journal article" date="2005" name="Science">
        <title>The transcriptional landscape of the mammalian genome.</title>
        <authorList>
            <person name="Carninci P."/>
            <person name="Kasukawa T."/>
            <person name="Katayama S."/>
            <person name="Gough J."/>
            <person name="Frith M.C."/>
            <person name="Maeda N."/>
            <person name="Oyama R."/>
            <person name="Ravasi T."/>
            <person name="Lenhard B."/>
            <person name="Wells C."/>
            <person name="Kodzius R."/>
            <person name="Shimokawa K."/>
            <person name="Bajic V.B."/>
            <person name="Brenner S.E."/>
            <person name="Batalov S."/>
            <person name="Forrest A.R."/>
            <person name="Zavolan M."/>
            <person name="Davis M.J."/>
            <person name="Wilming L.G."/>
            <person name="Aidinis V."/>
            <person name="Allen J.E."/>
            <person name="Ambesi-Impiombato A."/>
            <person name="Apweiler R."/>
            <person name="Aturaliya R.N."/>
            <person name="Bailey T.L."/>
            <person name="Bansal M."/>
            <person name="Baxter L."/>
            <person name="Beisel K.W."/>
            <person name="Bersano T."/>
            <person name="Bono H."/>
            <person name="Chalk A.M."/>
            <person name="Chiu K.P."/>
            <person name="Choudhary V."/>
            <person name="Christoffels A."/>
            <person name="Clutterbuck D.R."/>
            <person name="Crowe M.L."/>
            <person name="Dalla E."/>
            <person name="Dalrymple B.P."/>
            <person name="de Bono B."/>
            <person name="Della Gatta G."/>
            <person name="di Bernardo D."/>
            <person name="Down T."/>
            <person name="Engstrom P."/>
            <person name="Fagiolini M."/>
            <person name="Faulkner G."/>
            <person name="Fletcher C.F."/>
            <person name="Fukushima T."/>
            <person name="Furuno M."/>
            <person name="Futaki S."/>
            <person name="Gariboldi M."/>
            <person name="Georgii-Hemming P."/>
            <person name="Gingeras T.R."/>
            <person name="Gojobori T."/>
            <person name="Green R.E."/>
            <person name="Gustincich S."/>
            <person name="Harbers M."/>
            <person name="Hayashi Y."/>
            <person name="Hensch T.K."/>
            <person name="Hirokawa N."/>
            <person name="Hill D."/>
            <person name="Huminiecki L."/>
            <person name="Iacono M."/>
            <person name="Ikeo K."/>
            <person name="Iwama A."/>
            <person name="Ishikawa T."/>
            <person name="Jakt M."/>
            <person name="Kanapin A."/>
            <person name="Katoh M."/>
            <person name="Kawasawa Y."/>
            <person name="Kelso J."/>
            <person name="Kitamura H."/>
            <person name="Kitano H."/>
            <person name="Kollias G."/>
            <person name="Krishnan S.P."/>
            <person name="Kruger A."/>
            <person name="Kummerfeld S.K."/>
            <person name="Kurochkin I.V."/>
            <person name="Lareau L.F."/>
            <person name="Lazarevic D."/>
            <person name="Lipovich L."/>
            <person name="Liu J."/>
            <person name="Liuni S."/>
            <person name="McWilliam S."/>
            <person name="Madan Babu M."/>
            <person name="Madera M."/>
            <person name="Marchionni L."/>
            <person name="Matsuda H."/>
            <person name="Matsuzawa S."/>
            <person name="Miki H."/>
            <person name="Mignone F."/>
            <person name="Miyake S."/>
            <person name="Morris K."/>
            <person name="Mottagui-Tabar S."/>
            <person name="Mulder N."/>
            <person name="Nakano N."/>
            <person name="Nakauchi H."/>
            <person name="Ng P."/>
            <person name="Nilsson R."/>
            <person name="Nishiguchi S."/>
            <person name="Nishikawa S."/>
            <person name="Nori F."/>
            <person name="Ohara O."/>
            <person name="Okazaki Y."/>
            <person name="Orlando V."/>
            <person name="Pang K.C."/>
            <person name="Pavan W.J."/>
            <person name="Pavesi G."/>
            <person name="Pesole G."/>
            <person name="Petrovsky N."/>
            <person name="Piazza S."/>
            <person name="Reed J."/>
            <person name="Reid J.F."/>
            <person name="Ring B.Z."/>
            <person name="Ringwald M."/>
            <person name="Rost B."/>
            <person name="Ruan Y."/>
            <person name="Salzberg S.L."/>
            <person name="Sandelin A."/>
            <person name="Schneider C."/>
            <person name="Schoenbach C."/>
            <person name="Sekiguchi K."/>
            <person name="Semple C.A."/>
            <person name="Seno S."/>
            <person name="Sessa L."/>
            <person name="Sheng Y."/>
            <person name="Shibata Y."/>
            <person name="Shimada H."/>
            <person name="Shimada K."/>
            <person name="Silva D."/>
            <person name="Sinclair B."/>
            <person name="Sperling S."/>
            <person name="Stupka E."/>
            <person name="Sugiura K."/>
            <person name="Sultana R."/>
            <person name="Takenaka Y."/>
            <person name="Taki K."/>
            <person name="Tammoja K."/>
            <person name="Tan S.L."/>
            <person name="Tang S."/>
            <person name="Taylor M.S."/>
            <person name="Tegner J."/>
            <person name="Teichmann S.A."/>
            <person name="Ueda H.R."/>
            <person name="van Nimwegen E."/>
            <person name="Verardo R."/>
            <person name="Wei C.L."/>
            <person name="Yagi K."/>
            <person name="Yamanishi H."/>
            <person name="Zabarovsky E."/>
            <person name="Zhu S."/>
            <person name="Zimmer A."/>
            <person name="Hide W."/>
            <person name="Bult C."/>
            <person name="Grimmond S.M."/>
            <person name="Teasdale R.D."/>
            <person name="Liu E.T."/>
            <person name="Brusic V."/>
            <person name="Quackenbush J."/>
            <person name="Wahlestedt C."/>
            <person name="Mattick J.S."/>
            <person name="Hume D.A."/>
            <person name="Kai C."/>
            <person name="Sasaki D."/>
            <person name="Tomaru Y."/>
            <person name="Fukuda S."/>
            <person name="Kanamori-Katayama M."/>
            <person name="Suzuki M."/>
            <person name="Aoki J."/>
            <person name="Arakawa T."/>
            <person name="Iida J."/>
            <person name="Imamura K."/>
            <person name="Itoh M."/>
            <person name="Kato T."/>
            <person name="Kawaji H."/>
            <person name="Kawagashira N."/>
            <person name="Kawashima T."/>
            <person name="Kojima M."/>
            <person name="Kondo S."/>
            <person name="Konno H."/>
            <person name="Nakano K."/>
            <person name="Ninomiya N."/>
            <person name="Nishio T."/>
            <person name="Okada M."/>
            <person name="Plessy C."/>
            <person name="Shibata K."/>
            <person name="Shiraki T."/>
            <person name="Suzuki S."/>
            <person name="Tagami M."/>
            <person name="Waki K."/>
            <person name="Watahiki A."/>
            <person name="Okamura-Oho Y."/>
            <person name="Suzuki H."/>
            <person name="Kawai J."/>
            <person name="Hayashizaki Y."/>
        </authorList>
    </citation>
    <scope>NUCLEOTIDE SEQUENCE [LARGE SCALE MRNA] (ISOFORM 2)</scope>
    <source>
        <strain>C57BL/6J</strain>
        <tissue>Testis</tissue>
    </source>
</reference>
<reference key="3">
    <citation type="journal article" date="1998" name="Development">
        <title>Embryonic phenotype of Unc5h3 mutant mice suggests chemorepulsion during the formation of the rostral cerebellar boundary.</title>
        <authorList>
            <person name="Przyborski S.A."/>
            <person name="Knowles B.B."/>
            <person name="Ackerman S.L."/>
        </authorList>
    </citation>
    <scope>FUNCTION</scope>
    <scope>TISSUE SPECIFICITY</scope>
</reference>
<reference key="4">
    <citation type="journal article" date="1999" name="Cell">
        <title>A ligand-gated association between cytoplasmic domains of UNC5 and DCC family receptors converts netrin-induced growth cone attraction to repulsion.</title>
        <authorList>
            <person name="Hong K."/>
            <person name="Hinck L."/>
            <person name="Nishiyama M."/>
            <person name="Poo M.-M."/>
            <person name="Tessier-Lavigne M."/>
            <person name="Stein E."/>
        </authorList>
    </citation>
    <scope>FUNCTION</scope>
    <scope>INTERACTION WITH DCC</scope>
</reference>
<reference key="5">
    <citation type="journal article" date="2001" name="J. Biol. Chem.">
        <title>Netrin stimulates tyrosine phosphorylation of the UNC-5 family of netrin receptors and induces Shp2 binding to the RCM cytodomain.</title>
        <authorList>
            <person name="Tong J."/>
            <person name="Killeen M."/>
            <person name="Steven R."/>
            <person name="Binns K.L."/>
            <person name="Culotti J."/>
            <person name="Pawson T."/>
        </authorList>
    </citation>
    <scope>PHOSPHORYLATION AT TYR-568</scope>
    <scope>MUTAGENESIS OF TYR-568</scope>
    <scope>INTERACTION WITH DCC AND PTPN11</scope>
</reference>
<reference key="6">
    <citation type="journal article" date="2002" name="J. Neurosci.">
        <title>The netrin 1 receptors Unc5h3 and Dcc are necessary at multiple choice points for the guidance of corticospinal tract axons.</title>
        <authorList>
            <person name="Finger J.H."/>
            <person name="Bronson R.T."/>
            <person name="Harris B."/>
            <person name="Johnson K."/>
            <person name="Przyborski S.A."/>
            <person name="Ackerman S.L."/>
        </authorList>
    </citation>
    <scope>FUNCTION</scope>
</reference>
<reference key="7">
    <citation type="journal article" date="2010" name="Cell">
        <title>A tissue-specific atlas of mouse protein phosphorylation and expression.</title>
        <authorList>
            <person name="Huttlin E.L."/>
            <person name="Jedrychowski M.P."/>
            <person name="Elias J.E."/>
            <person name="Goswami T."/>
            <person name="Rad R."/>
            <person name="Beausoleil S.A."/>
            <person name="Villen J."/>
            <person name="Haas W."/>
            <person name="Sowa M.E."/>
            <person name="Gygi S.P."/>
        </authorList>
    </citation>
    <scope>PHOSPHORYLATION [LARGE SCALE ANALYSIS] AT SER-502</scope>
    <scope>IDENTIFICATION BY MASS SPECTROMETRY [LARGE SCALE ANALYSIS]</scope>
    <source>
        <tissue>Brain</tissue>
    </source>
</reference>
<reference key="8">
    <citation type="journal article" date="2012" name="J. Biol. Chem.">
        <title>Down syndrome cell adhesion molecule (DSCAM) associates with uncoordinated-5C (UNC5C) in netrin-1-mediated growth cone collapse.</title>
        <authorList>
            <person name="Purohit A.A."/>
            <person name="Li W."/>
            <person name="Qu C."/>
            <person name="Dwyer T."/>
            <person name="Shao Q."/>
            <person name="Guan K.L."/>
            <person name="Liu G."/>
        </authorList>
    </citation>
    <scope>FUNCTION</scope>
    <scope>INTERACTION WITH DSCAM</scope>
    <scope>SUBCELLULAR LOCATION</scope>
    <scope>TISSUE SPECIFICITY</scope>
    <scope>DEVELOPMENTAL STAGE</scope>
    <scope>PHOSPHORYLATION</scope>
</reference>
<reference key="9">
    <citation type="journal article" date="2012" name="Neuron">
        <title>FLRT proteins are endogenous latrophilin ligands and regulate excitatory synapse development.</title>
        <authorList>
            <person name="O'Sullivan M.L."/>
            <person name="de Wit J."/>
            <person name="Savas J.N."/>
            <person name="Comoletti D."/>
            <person name="Otto-Hitt S."/>
            <person name="Yates J.R. III"/>
            <person name="Ghosh A."/>
        </authorList>
    </citation>
    <scope>INTERACTION WITH FLRT3</scope>
    <scope>SUBCELLULAR LOCATION</scope>
</reference>
<reference key="10">
    <citation type="journal article" date="2014" name="Nat. Med.">
        <title>A rare mutation in UNC5C predisposes to late-onset Alzheimer's disease and increases neuronal cell death.</title>
        <authorList>
            <consortium name="Alzheimer's Disease Genetics Consortium"/>
            <person name="Wetzel-Smith M.K."/>
            <person name="Hunkapiller J."/>
            <person name="Bhangale T.R."/>
            <person name="Srinivasan K."/>
            <person name="Maloney J.A."/>
            <person name="Atwal J.K."/>
            <person name="Sa S.M."/>
            <person name="Yaylaoglu M.B."/>
            <person name="Foreman O."/>
            <person name="Ortmann W."/>
            <person name="Rathore N."/>
            <person name="Hansen D.V."/>
            <person name="Tessier-Lavigne M."/>
            <person name="Mayeux R."/>
            <person name="Pericak-Vance M."/>
            <person name="Haines J."/>
            <person name="Farrer L.A."/>
            <person name="Schellenberg G.D."/>
            <person name="Goate A."/>
            <person name="Behrens T.W."/>
            <person name="Cruchaga C."/>
            <person name="Watts R.J."/>
            <person name="Graham R.R."/>
        </authorList>
    </citation>
    <scope>TISSUE SPECIFICITY</scope>
</reference>
<reference key="11">
    <citation type="journal article" date="2017" name="J. Neurosci.">
        <title>Uncoupling of UNC5C with Polymerized TUBB3 in Microtubules Mediates Netrin-1 Repulsion.</title>
        <authorList>
            <person name="Shao Q."/>
            <person name="Yang T."/>
            <person name="Huang H."/>
            <person name="Alarmanazi F."/>
            <person name="Liu G."/>
        </authorList>
    </citation>
    <scope>FUNCTION</scope>
    <scope>INTERACTION WITH TUBB3</scope>
    <scope>SUBCELLULAR LOCATION</scope>
    <scope>TISSUE SPECIFICITY</scope>
    <scope>DEVELOPMENTAL STAGE</scope>
</reference>